<organism>
    <name type="scientific">Yersinia pestis bv. Antiqua (strain Nepal516)</name>
    <dbReference type="NCBI Taxonomy" id="377628"/>
    <lineage>
        <taxon>Bacteria</taxon>
        <taxon>Pseudomonadati</taxon>
        <taxon>Pseudomonadota</taxon>
        <taxon>Gammaproteobacteria</taxon>
        <taxon>Enterobacterales</taxon>
        <taxon>Yersiniaceae</taxon>
        <taxon>Yersinia</taxon>
    </lineage>
</organism>
<accession>Q1CCX2</accession>
<accession>D1Q2J2</accession>
<protein>
    <recommendedName>
        <fullName evidence="1">Large-conductance mechanosensitive channel</fullName>
    </recommendedName>
</protein>
<name>MSCL_YERPN</name>
<keyword id="KW-0997">Cell inner membrane</keyword>
<keyword id="KW-1003">Cell membrane</keyword>
<keyword id="KW-0407">Ion channel</keyword>
<keyword id="KW-0406">Ion transport</keyword>
<keyword id="KW-0472">Membrane</keyword>
<keyword id="KW-0812">Transmembrane</keyword>
<keyword id="KW-1133">Transmembrane helix</keyword>
<keyword id="KW-0813">Transport</keyword>
<feature type="chain" id="PRO_1000015436" description="Large-conductance mechanosensitive channel">
    <location>
        <begin position="1"/>
        <end position="137"/>
    </location>
</feature>
<feature type="transmembrane region" description="Helical" evidence="1">
    <location>
        <begin position="10"/>
        <end position="30"/>
    </location>
</feature>
<feature type="transmembrane region" description="Helical" evidence="1">
    <location>
        <begin position="76"/>
        <end position="96"/>
    </location>
</feature>
<reference key="1">
    <citation type="journal article" date="2006" name="J. Bacteriol.">
        <title>Complete genome sequence of Yersinia pestis strains Antiqua and Nepal516: evidence of gene reduction in an emerging pathogen.</title>
        <authorList>
            <person name="Chain P.S.G."/>
            <person name="Hu P."/>
            <person name="Malfatti S.A."/>
            <person name="Radnedge L."/>
            <person name="Larimer F."/>
            <person name="Vergez L.M."/>
            <person name="Worsham P."/>
            <person name="Chu M.C."/>
            <person name="Andersen G.L."/>
        </authorList>
    </citation>
    <scope>NUCLEOTIDE SEQUENCE [LARGE SCALE GENOMIC DNA]</scope>
    <source>
        <strain>Nepal516</strain>
    </source>
</reference>
<reference key="2">
    <citation type="submission" date="2009-04" db="EMBL/GenBank/DDBJ databases">
        <title>Yersinia pestis Nepal516A whole genome shotgun sequencing project.</title>
        <authorList>
            <person name="Plunkett G. III"/>
            <person name="Anderson B.D."/>
            <person name="Baumler D.J."/>
            <person name="Burland V."/>
            <person name="Cabot E.L."/>
            <person name="Glasner J.D."/>
            <person name="Mau B."/>
            <person name="Neeno-Eckwall E."/>
            <person name="Perna N.T."/>
            <person name="Munk A.C."/>
            <person name="Tapia R."/>
            <person name="Green L.D."/>
            <person name="Rogers Y.C."/>
            <person name="Detter J.C."/>
            <person name="Bruce D.C."/>
            <person name="Brettin T.S."/>
        </authorList>
    </citation>
    <scope>NUCLEOTIDE SEQUENCE [LARGE SCALE GENOMIC DNA]</scope>
    <source>
        <strain>Nepal516</strain>
    </source>
</reference>
<evidence type="ECO:0000255" key="1">
    <source>
        <dbReference type="HAMAP-Rule" id="MF_00115"/>
    </source>
</evidence>
<dbReference type="EMBL" id="CP000305">
    <property type="protein sequence ID" value="ABG20158.1"/>
    <property type="molecule type" value="Genomic_DNA"/>
</dbReference>
<dbReference type="EMBL" id="ACNQ01000019">
    <property type="protein sequence ID" value="EEO74745.1"/>
    <property type="molecule type" value="Genomic_DNA"/>
</dbReference>
<dbReference type="RefSeq" id="WP_002209017.1">
    <property type="nucleotide sequence ID" value="NZ_ACNQ01000019.1"/>
</dbReference>
<dbReference type="SMR" id="Q1CCX2"/>
<dbReference type="GeneID" id="57974366"/>
<dbReference type="KEGG" id="ypn:YPN_3831"/>
<dbReference type="HOGENOM" id="CLU_095787_0_0_6"/>
<dbReference type="Proteomes" id="UP000008936">
    <property type="component" value="Chromosome"/>
</dbReference>
<dbReference type="GO" id="GO:0005886">
    <property type="term" value="C:plasma membrane"/>
    <property type="evidence" value="ECO:0007669"/>
    <property type="project" value="UniProtKB-SubCell"/>
</dbReference>
<dbReference type="GO" id="GO:0008381">
    <property type="term" value="F:mechanosensitive monoatomic ion channel activity"/>
    <property type="evidence" value="ECO:0007669"/>
    <property type="project" value="UniProtKB-UniRule"/>
</dbReference>
<dbReference type="FunFam" id="1.10.1200.120:FF:000001">
    <property type="entry name" value="Large-conductance mechanosensitive channel"/>
    <property type="match status" value="1"/>
</dbReference>
<dbReference type="Gene3D" id="1.10.1200.120">
    <property type="entry name" value="Large-conductance mechanosensitive channel, MscL, domain 1"/>
    <property type="match status" value="1"/>
</dbReference>
<dbReference type="HAMAP" id="MF_00115">
    <property type="entry name" value="MscL"/>
    <property type="match status" value="1"/>
</dbReference>
<dbReference type="InterPro" id="IPR019823">
    <property type="entry name" value="Mechanosensitive_channel_CS"/>
</dbReference>
<dbReference type="InterPro" id="IPR001185">
    <property type="entry name" value="MS_channel"/>
</dbReference>
<dbReference type="InterPro" id="IPR037673">
    <property type="entry name" value="MSC/AndL"/>
</dbReference>
<dbReference type="InterPro" id="IPR036019">
    <property type="entry name" value="MscL_channel"/>
</dbReference>
<dbReference type="NCBIfam" id="TIGR00220">
    <property type="entry name" value="mscL"/>
    <property type="match status" value="1"/>
</dbReference>
<dbReference type="NCBIfam" id="NF001841">
    <property type="entry name" value="PRK00567.1-1"/>
    <property type="match status" value="1"/>
</dbReference>
<dbReference type="NCBIfam" id="NF001843">
    <property type="entry name" value="PRK00567.1-4"/>
    <property type="match status" value="1"/>
</dbReference>
<dbReference type="PANTHER" id="PTHR30266:SF2">
    <property type="entry name" value="LARGE-CONDUCTANCE MECHANOSENSITIVE CHANNEL"/>
    <property type="match status" value="1"/>
</dbReference>
<dbReference type="PANTHER" id="PTHR30266">
    <property type="entry name" value="MECHANOSENSITIVE CHANNEL MSCL"/>
    <property type="match status" value="1"/>
</dbReference>
<dbReference type="Pfam" id="PF01741">
    <property type="entry name" value="MscL"/>
    <property type="match status" value="1"/>
</dbReference>
<dbReference type="PRINTS" id="PR01264">
    <property type="entry name" value="MECHCHANNEL"/>
</dbReference>
<dbReference type="SUPFAM" id="SSF81330">
    <property type="entry name" value="Gated mechanosensitive channel"/>
    <property type="match status" value="1"/>
</dbReference>
<dbReference type="PROSITE" id="PS01327">
    <property type="entry name" value="MSCL"/>
    <property type="match status" value="1"/>
</dbReference>
<comment type="function">
    <text evidence="1">Channel that opens in response to stretch forces in the membrane lipid bilayer. May participate in the regulation of osmotic pressure changes within the cell.</text>
</comment>
<comment type="subunit">
    <text evidence="1">Homopentamer.</text>
</comment>
<comment type="subcellular location">
    <subcellularLocation>
        <location evidence="1">Cell inner membrane</location>
        <topology evidence="1">Multi-pass membrane protein</topology>
    </subcellularLocation>
</comment>
<comment type="similarity">
    <text evidence="1">Belongs to the MscL family.</text>
</comment>
<proteinExistence type="inferred from homology"/>
<sequence length="137" mass="15049">MSFMKEFREFAMRGNVVDLAVGVIIGAAFGRIVSSLVADIIMPPLGLLLGGVDFKQFHFVLRAAEGTIPAVVMNYGTFIQSIFDFVIVALAIFSAVKLMNKLRREKAEEEPATPPAPTTEEILLAEIRDLLKAQHTK</sequence>
<gene>
    <name evidence="1" type="primary">mscL</name>
    <name type="ordered locus">YPN_3831</name>
    <name type="ORF">YP516_4353</name>
</gene>